<sequence>MPPSSSITQEDKATIRKYIPKSTNKIIAAAVVKLYVAYPDPNKWNYTGLCGALVLSYDTTAKCCWFKLVDVVNNSGIIWDQELYQNMDYRQDRTFFHSFELDKCLAGFSFANETDAQKFYKKVLDKGCHPESIENPVLSFITRKGSSRHAPNNSNIQPPSAAPPVPGKENYNAVGSKSPNEPELLNSLDPSLIDSLMKMGISQDQIAENADFVKAYLNESAGTPTSTSAPPIPPSIPSSRPPERVPSLSAPAPPPIPPPSNGTVSSPPNSPPRPIAPVSMNPAINSTSKPPLPPPSSRVSAAALAANKKRPPPPPPPSRRNRGKPPIGNGSSNSSLPPPPPPPRSNAAGSIPLPPQGRSAPPPPPPRSAPSTGRQPPPLSSSRAVSNPPAPPPAIPGRSAPALPPLGNASRTSTPPVPTPPSLPPSAPPSLPPSAPPSLPMGAPAAPPLPPSAPIAPPLPAGMPAAPPLPPAAPAPPPAPAPAPAAPVASIAELPQQDGRANLMASIRASGGMDLLKSRKVSASPSVASTKTSNPPVEAPPSNNLMDALASALNQRKTKVAQSDEEDEDDDEWD</sequence>
<protein>
    <recommendedName>
        <fullName evidence="8">Actin-binding protein wsp1</fullName>
    </recommendedName>
    <alternativeName>
        <fullName>Wiskott-Aldrich syndrome protein homolog 1</fullName>
    </alternativeName>
</protein>
<proteinExistence type="evidence at protein level"/>
<evidence type="ECO:0000250" key="1"/>
<evidence type="ECO:0000255" key="2">
    <source>
        <dbReference type="PROSITE-ProRule" id="PRU00406"/>
    </source>
</evidence>
<evidence type="ECO:0000255" key="3">
    <source>
        <dbReference type="PROSITE-ProRule" id="PRU00410"/>
    </source>
</evidence>
<evidence type="ECO:0000256" key="4">
    <source>
        <dbReference type="SAM" id="MobiDB-lite"/>
    </source>
</evidence>
<evidence type="ECO:0000269" key="5">
    <source>
    </source>
</evidence>
<evidence type="ECO:0000269" key="6">
    <source>
    </source>
</evidence>
<evidence type="ECO:0000269" key="7">
    <source>
    </source>
</evidence>
<evidence type="ECO:0000305" key="8"/>
<gene>
    <name type="primary">wsp1</name>
    <name type="ORF">SPAC4F10.15c</name>
</gene>
<dbReference type="EMBL" id="AF038575">
    <property type="protein sequence ID" value="AAB92587.1"/>
    <property type="molecule type" value="Genomic_DNA"/>
</dbReference>
<dbReference type="EMBL" id="CU329670">
    <property type="protein sequence ID" value="CAB11718.1"/>
    <property type="molecule type" value="Genomic_DNA"/>
</dbReference>
<dbReference type="PIR" id="T38819">
    <property type="entry name" value="T38819"/>
</dbReference>
<dbReference type="PIR" id="T43556">
    <property type="entry name" value="T43556"/>
</dbReference>
<dbReference type="RefSeq" id="NP_594758.1">
    <property type="nucleotide sequence ID" value="NM_001020185.2"/>
</dbReference>
<dbReference type="BioGRID" id="280004">
    <property type="interactions" value="14"/>
</dbReference>
<dbReference type="FunCoup" id="O36027">
    <property type="interactions" value="129"/>
</dbReference>
<dbReference type="IntAct" id="O36027">
    <property type="interactions" value="9"/>
</dbReference>
<dbReference type="STRING" id="284812.O36027"/>
<dbReference type="iPTMnet" id="O36027"/>
<dbReference type="PaxDb" id="4896-SPAC4F10.15c.1"/>
<dbReference type="EnsemblFungi" id="SPAC4F10.15c.1">
    <property type="protein sequence ID" value="SPAC4F10.15c.1:pep"/>
    <property type="gene ID" value="SPAC4F10.15c"/>
</dbReference>
<dbReference type="GeneID" id="2543589"/>
<dbReference type="KEGG" id="spo:2543589"/>
<dbReference type="PomBase" id="SPAC4F10.15c">
    <property type="gene designation" value="wsp1"/>
</dbReference>
<dbReference type="VEuPathDB" id="FungiDB:SPAC4F10.15c"/>
<dbReference type="eggNOG" id="KOG3671">
    <property type="taxonomic scope" value="Eukaryota"/>
</dbReference>
<dbReference type="HOGENOM" id="CLU_015385_1_1_1"/>
<dbReference type="InParanoid" id="O36027"/>
<dbReference type="OMA" id="EYNQDRK"/>
<dbReference type="PRO" id="PR:O36027"/>
<dbReference type="Proteomes" id="UP000002485">
    <property type="component" value="Chromosome I"/>
</dbReference>
<dbReference type="GO" id="GO:0030479">
    <property type="term" value="C:actin cortical patch"/>
    <property type="evidence" value="ECO:0000314"/>
    <property type="project" value="PomBase"/>
</dbReference>
<dbReference type="GO" id="GO:0043332">
    <property type="term" value="C:mating projection tip"/>
    <property type="evidence" value="ECO:0000314"/>
    <property type="project" value="PomBase"/>
</dbReference>
<dbReference type="GO" id="GO:0031097">
    <property type="term" value="C:medial cortex"/>
    <property type="evidence" value="ECO:0000314"/>
    <property type="project" value="PomBase"/>
</dbReference>
<dbReference type="GO" id="GO:0003785">
    <property type="term" value="F:actin monomer binding"/>
    <property type="evidence" value="ECO:0000314"/>
    <property type="project" value="PomBase"/>
</dbReference>
<dbReference type="GO" id="GO:0071933">
    <property type="term" value="F:Arp2/3 complex binding"/>
    <property type="evidence" value="ECO:0000314"/>
    <property type="project" value="PomBase"/>
</dbReference>
<dbReference type="GO" id="GO:0000147">
    <property type="term" value="P:actin cortical patch assembly"/>
    <property type="evidence" value="ECO:0000315"/>
    <property type="project" value="PomBase"/>
</dbReference>
<dbReference type="GO" id="GO:0090135">
    <property type="term" value="P:actin filament branching"/>
    <property type="evidence" value="ECO:0000315"/>
    <property type="project" value="PomBase"/>
</dbReference>
<dbReference type="GO" id="GO:0034314">
    <property type="term" value="P:Arp2/3 complex-mediated actin nucleation"/>
    <property type="evidence" value="ECO:0000314"/>
    <property type="project" value="PomBase"/>
</dbReference>
<dbReference type="GO" id="GO:0006897">
    <property type="term" value="P:endocytosis"/>
    <property type="evidence" value="ECO:0000315"/>
    <property type="project" value="PomBase"/>
</dbReference>
<dbReference type="GO" id="GO:0007163">
    <property type="term" value="P:establishment or maintenance of cell polarity"/>
    <property type="evidence" value="ECO:0000316"/>
    <property type="project" value="PomBase"/>
</dbReference>
<dbReference type="GO" id="GO:1903475">
    <property type="term" value="P:mitotic actomyosin contractile ring assembly"/>
    <property type="evidence" value="ECO:0000315"/>
    <property type="project" value="PomBase"/>
</dbReference>
<dbReference type="GO" id="GO:0000281">
    <property type="term" value="P:mitotic cytokinesis"/>
    <property type="evidence" value="ECO:0000315"/>
    <property type="project" value="PomBase"/>
</dbReference>
<dbReference type="CDD" id="cd01205">
    <property type="entry name" value="EVH1_WASP-like"/>
    <property type="match status" value="1"/>
</dbReference>
<dbReference type="FunFam" id="2.30.29.30:FF:000281">
    <property type="entry name" value="Actin associated protein"/>
    <property type="match status" value="1"/>
</dbReference>
<dbReference type="Gene3D" id="2.30.29.30">
    <property type="entry name" value="Pleckstrin-homology domain (PH domain)/Phosphotyrosine-binding domain (PTB)"/>
    <property type="match status" value="1"/>
</dbReference>
<dbReference type="InterPro" id="IPR011993">
    <property type="entry name" value="PH-like_dom_sf"/>
</dbReference>
<dbReference type="InterPro" id="IPR033927">
    <property type="entry name" value="WASPfam_EVH1"/>
</dbReference>
<dbReference type="InterPro" id="IPR000697">
    <property type="entry name" value="WH1/EVH1_dom"/>
</dbReference>
<dbReference type="InterPro" id="IPR003124">
    <property type="entry name" value="WH2_dom"/>
</dbReference>
<dbReference type="Pfam" id="PF00568">
    <property type="entry name" value="WH1"/>
    <property type="match status" value="1"/>
</dbReference>
<dbReference type="SMART" id="SM00461">
    <property type="entry name" value="WH1"/>
    <property type="match status" value="1"/>
</dbReference>
<dbReference type="SUPFAM" id="SSF50729">
    <property type="entry name" value="PH domain-like"/>
    <property type="match status" value="1"/>
</dbReference>
<dbReference type="PROSITE" id="PS50229">
    <property type="entry name" value="WH1"/>
    <property type="match status" value="1"/>
</dbReference>
<dbReference type="PROSITE" id="PS51082">
    <property type="entry name" value="WH2"/>
    <property type="match status" value="1"/>
</dbReference>
<feature type="chain" id="PRO_0000189003" description="Actin-binding protein wsp1">
    <location>
        <begin position="1"/>
        <end position="574"/>
    </location>
</feature>
<feature type="domain" description="WH1" evidence="3">
    <location>
        <begin position="19"/>
        <end position="130"/>
    </location>
</feature>
<feature type="domain" description="WH2" evidence="2">
    <location>
        <begin position="499"/>
        <end position="518"/>
    </location>
</feature>
<feature type="region of interest" description="Disordered" evidence="4">
    <location>
        <begin position="144"/>
        <end position="186"/>
    </location>
</feature>
<feature type="region of interest" description="Disordered" evidence="4">
    <location>
        <begin position="221"/>
        <end position="494"/>
    </location>
</feature>
<feature type="region of interest" description="Disordered" evidence="4">
    <location>
        <begin position="517"/>
        <end position="574"/>
    </location>
</feature>
<feature type="compositionally biased region" description="Polar residues" evidence="4">
    <location>
        <begin position="149"/>
        <end position="158"/>
    </location>
</feature>
<feature type="compositionally biased region" description="Pro residues" evidence="4">
    <location>
        <begin position="230"/>
        <end position="240"/>
    </location>
</feature>
<feature type="compositionally biased region" description="Pro residues" evidence="4">
    <location>
        <begin position="251"/>
        <end position="260"/>
    </location>
</feature>
<feature type="compositionally biased region" description="Low complexity" evidence="4">
    <location>
        <begin position="297"/>
        <end position="306"/>
    </location>
</feature>
<feature type="compositionally biased region" description="Low complexity" evidence="4">
    <location>
        <begin position="324"/>
        <end position="335"/>
    </location>
</feature>
<feature type="compositionally biased region" description="Pro residues" evidence="4">
    <location>
        <begin position="352"/>
        <end position="368"/>
    </location>
</feature>
<feature type="compositionally biased region" description="Pro residues" evidence="4">
    <location>
        <begin position="415"/>
        <end position="485"/>
    </location>
</feature>
<feature type="compositionally biased region" description="Polar residues" evidence="4">
    <location>
        <begin position="521"/>
        <end position="545"/>
    </location>
</feature>
<feature type="compositionally biased region" description="Acidic residues" evidence="4">
    <location>
        <begin position="563"/>
        <end position="574"/>
    </location>
</feature>
<feature type="modified residue" description="Phosphoserine" evidence="7">
    <location>
        <position position="386"/>
    </location>
</feature>
<feature type="sequence conflict" description="In Ref. 1; AAB92587." evidence="8" ref="1">
    <original>L</original>
    <variation>V</variation>
    <location>
        <position position="248"/>
    </location>
</feature>
<organism>
    <name type="scientific">Schizosaccharomyces pombe (strain 972 / ATCC 24843)</name>
    <name type="common">Fission yeast</name>
    <dbReference type="NCBI Taxonomy" id="284812"/>
    <lineage>
        <taxon>Eukaryota</taxon>
        <taxon>Fungi</taxon>
        <taxon>Dikarya</taxon>
        <taxon>Ascomycota</taxon>
        <taxon>Taphrinomycotina</taxon>
        <taxon>Schizosaccharomycetes</taxon>
        <taxon>Schizosaccharomycetales</taxon>
        <taxon>Schizosaccharomycetaceae</taxon>
        <taxon>Schizosaccharomyces</taxon>
    </lineage>
</organism>
<reference key="1">
    <citation type="submission" date="1997-12" db="EMBL/GenBank/DDBJ databases">
        <title>A Wiskott-Aldrich Syndrome protein homolog in Schizosaccharomyces pombe, Wsp1p, is implicated in stress-response pathways and control of the actin cytoskeleton.</title>
        <authorList>
            <person name="Zankel T.C."/>
            <person name="Ow D.W."/>
        </authorList>
    </citation>
    <scope>NUCLEOTIDE SEQUENCE [GENOMIC DNA]</scope>
</reference>
<reference key="2">
    <citation type="journal article" date="2002" name="Nature">
        <title>The genome sequence of Schizosaccharomyces pombe.</title>
        <authorList>
            <person name="Wood V."/>
            <person name="Gwilliam R."/>
            <person name="Rajandream M.A."/>
            <person name="Lyne M.H."/>
            <person name="Lyne R."/>
            <person name="Stewart A."/>
            <person name="Sgouros J.G."/>
            <person name="Peat N."/>
            <person name="Hayles J."/>
            <person name="Baker S.G."/>
            <person name="Basham D."/>
            <person name="Bowman S."/>
            <person name="Brooks K."/>
            <person name="Brown D."/>
            <person name="Brown S."/>
            <person name="Chillingworth T."/>
            <person name="Churcher C.M."/>
            <person name="Collins M."/>
            <person name="Connor R."/>
            <person name="Cronin A."/>
            <person name="Davis P."/>
            <person name="Feltwell T."/>
            <person name="Fraser A."/>
            <person name="Gentles S."/>
            <person name="Goble A."/>
            <person name="Hamlin N."/>
            <person name="Harris D.E."/>
            <person name="Hidalgo J."/>
            <person name="Hodgson G."/>
            <person name="Holroyd S."/>
            <person name="Hornsby T."/>
            <person name="Howarth S."/>
            <person name="Huckle E.J."/>
            <person name="Hunt S."/>
            <person name="Jagels K."/>
            <person name="James K.D."/>
            <person name="Jones L."/>
            <person name="Jones M."/>
            <person name="Leather S."/>
            <person name="McDonald S."/>
            <person name="McLean J."/>
            <person name="Mooney P."/>
            <person name="Moule S."/>
            <person name="Mungall K.L."/>
            <person name="Murphy L.D."/>
            <person name="Niblett D."/>
            <person name="Odell C."/>
            <person name="Oliver K."/>
            <person name="O'Neil S."/>
            <person name="Pearson D."/>
            <person name="Quail M.A."/>
            <person name="Rabbinowitsch E."/>
            <person name="Rutherford K.M."/>
            <person name="Rutter S."/>
            <person name="Saunders D."/>
            <person name="Seeger K."/>
            <person name="Sharp S."/>
            <person name="Skelton J."/>
            <person name="Simmonds M.N."/>
            <person name="Squares R."/>
            <person name="Squares S."/>
            <person name="Stevens K."/>
            <person name="Taylor K."/>
            <person name="Taylor R.G."/>
            <person name="Tivey A."/>
            <person name="Walsh S.V."/>
            <person name="Warren T."/>
            <person name="Whitehead S."/>
            <person name="Woodward J.R."/>
            <person name="Volckaert G."/>
            <person name="Aert R."/>
            <person name="Robben J."/>
            <person name="Grymonprez B."/>
            <person name="Weltjens I."/>
            <person name="Vanstreels E."/>
            <person name="Rieger M."/>
            <person name="Schaefer M."/>
            <person name="Mueller-Auer S."/>
            <person name="Gabel C."/>
            <person name="Fuchs M."/>
            <person name="Duesterhoeft A."/>
            <person name="Fritzc C."/>
            <person name="Holzer E."/>
            <person name="Moestl D."/>
            <person name="Hilbert H."/>
            <person name="Borzym K."/>
            <person name="Langer I."/>
            <person name="Beck A."/>
            <person name="Lehrach H."/>
            <person name="Reinhardt R."/>
            <person name="Pohl T.M."/>
            <person name="Eger P."/>
            <person name="Zimmermann W."/>
            <person name="Wedler H."/>
            <person name="Wambutt R."/>
            <person name="Purnelle B."/>
            <person name="Goffeau A."/>
            <person name="Cadieu E."/>
            <person name="Dreano S."/>
            <person name="Gloux S."/>
            <person name="Lelaure V."/>
            <person name="Mottier S."/>
            <person name="Galibert F."/>
            <person name="Aves S.J."/>
            <person name="Xiang Z."/>
            <person name="Hunt C."/>
            <person name="Moore K."/>
            <person name="Hurst S.M."/>
            <person name="Lucas M."/>
            <person name="Rochet M."/>
            <person name="Gaillardin C."/>
            <person name="Tallada V.A."/>
            <person name="Garzon A."/>
            <person name="Thode G."/>
            <person name="Daga R.R."/>
            <person name="Cruzado L."/>
            <person name="Jimenez J."/>
            <person name="Sanchez M."/>
            <person name="del Rey F."/>
            <person name="Benito J."/>
            <person name="Dominguez A."/>
            <person name="Revuelta J.L."/>
            <person name="Moreno S."/>
            <person name="Armstrong J."/>
            <person name="Forsburg S.L."/>
            <person name="Cerutti L."/>
            <person name="Lowe T."/>
            <person name="McCombie W.R."/>
            <person name="Paulsen I."/>
            <person name="Potashkin J."/>
            <person name="Shpakovski G.V."/>
            <person name="Ussery D."/>
            <person name="Barrell B.G."/>
            <person name="Nurse P."/>
        </authorList>
    </citation>
    <scope>NUCLEOTIDE SEQUENCE [LARGE SCALE GENOMIC DNA]</scope>
    <source>
        <strain>972 / ATCC 24843</strain>
    </source>
</reference>
<reference key="3">
    <citation type="journal article" date="2000" name="J. Cell Biol.">
        <title>Fission yeast myosin-I, Myo1p, stimulates actin assembly by Arp2/3 complex and shares functions with WASp.</title>
        <authorList>
            <person name="Lee W.-L."/>
            <person name="Bezanilla M."/>
            <person name="Pollard T.D."/>
        </authorList>
    </citation>
    <scope>FUNCTION</scope>
</reference>
<reference key="4">
    <citation type="journal article" date="2003" name="J. Cell Biol.">
        <title>The PCH family protein, Cdc15p, recruits two F-actin nucleation pathways to coordinate cytokinetic actin ring formation in Schizosaccharomyces pombe.</title>
        <authorList>
            <person name="Carnahan R.H."/>
            <person name="Gould K.L."/>
        </authorList>
    </citation>
    <scope>INTERACTION WITH VRP1</scope>
</reference>
<reference key="5">
    <citation type="journal article" date="2008" name="J. Proteome Res.">
        <title>Phosphoproteome analysis of fission yeast.</title>
        <authorList>
            <person name="Wilson-Grady J.T."/>
            <person name="Villen J."/>
            <person name="Gygi S.P."/>
        </authorList>
    </citation>
    <scope>PHOSPHORYLATION [LARGE SCALE ANALYSIS] AT SER-386</scope>
    <scope>IDENTIFICATION BY MASS SPECTROMETRY</scope>
</reference>
<accession>O36027</accession>
<comment type="function">
    <text evidence="5">Has a role in regulating actin assembly, so regulating polarized growth.</text>
</comment>
<comment type="subunit">
    <text evidence="6">Interacts with vrp1.</text>
</comment>
<comment type="interaction">
    <interactant intactId="EBI-1148109">
        <id>O36027</id>
    </interactant>
    <interactant intactId="EBI-1148082">
        <id>Q9Y7Z8</id>
        <label>myo1</label>
    </interactant>
    <organismsDiffer>false</organismsDiffer>
    <experiments>4</experiments>
</comment>
<comment type="interaction">
    <interactant intactId="EBI-1148109">
        <id>O36027</id>
    </interactant>
    <interactant intactId="EBI-1148131">
        <id>Q9P6R1</id>
        <label>vrp1</label>
    </interactant>
    <organismsDiffer>false</organismsDiffer>
    <experiments>3</experiments>
</comment>
<comment type="subcellular location">
    <subcellularLocation>
        <location evidence="1">Cytoplasm</location>
        <location evidence="1">Cytoskeleton</location>
    </subcellularLocation>
</comment>
<keyword id="KW-0009">Actin-binding</keyword>
<keyword id="KW-0963">Cytoplasm</keyword>
<keyword id="KW-0206">Cytoskeleton</keyword>
<keyword id="KW-0597">Phosphoprotein</keyword>
<keyword id="KW-1185">Reference proteome</keyword>
<name>WSP1_SCHPO</name>